<name>NDUS4_DROME</name>
<keyword id="KW-0002">3D-structure</keyword>
<keyword id="KW-0249">Electron transport</keyword>
<keyword id="KW-0472">Membrane</keyword>
<keyword id="KW-0496">Mitochondrion</keyword>
<keyword id="KW-0999">Mitochondrion inner membrane</keyword>
<keyword id="KW-0597">Phosphoprotein</keyword>
<keyword id="KW-1185">Reference proteome</keyword>
<keyword id="KW-0679">Respiratory chain</keyword>
<keyword id="KW-0809">Transit peptide</keyword>
<keyword id="KW-0813">Transport</keyword>
<keyword id="KW-0830">Ubiquinone</keyword>
<evidence type="ECO:0000255" key="1"/>
<evidence type="ECO:0000255" key="2">
    <source>
        <dbReference type="RuleBase" id="RU367010"/>
    </source>
</evidence>
<evidence type="ECO:0000269" key="3">
    <source>
    </source>
</evidence>
<evidence type="ECO:0000269" key="4">
    <source>
    </source>
</evidence>
<evidence type="ECO:0000269" key="5">
    <source>
    </source>
</evidence>
<evidence type="ECO:0000303" key="6">
    <source>
    </source>
</evidence>
<evidence type="ECO:0000303" key="7">
    <source>
    </source>
</evidence>
<evidence type="ECO:0000305" key="8"/>
<evidence type="ECO:0000312" key="9">
    <source>
        <dbReference type="EMBL" id="AAL48151.1"/>
    </source>
</evidence>
<evidence type="ECO:0000312" key="10">
    <source>
        <dbReference type="EMBL" id="AAN09490.1"/>
    </source>
</evidence>
<evidence type="ECO:0000312" key="11">
    <source>
        <dbReference type="EMBL" id="ABG02165.1"/>
    </source>
</evidence>
<evidence type="ECO:0000312" key="12">
    <source>
        <dbReference type="FlyBase" id="FBgn0031021"/>
    </source>
</evidence>
<evidence type="ECO:0000312" key="13">
    <source>
        <dbReference type="Proteomes" id="UP000000803"/>
    </source>
</evidence>
<evidence type="ECO:0007829" key="14">
    <source>
        <dbReference type="PDB" id="8B9Z"/>
    </source>
</evidence>
<sequence>MSALRQVMCRSTASLQLYQANRAAAARWASTATDGGPLDPKTALARPEELEQRNKLSGKITVPTAVNLSPISGVPEEHIRERRVRIHIPPKNAMQSGTDNVNTWQIEFDNRERWENPLMGWASSGDPLSNMNVQFGSPEEAITFCERNGWRWYVDGAAKPKKERVKNYGINFAWNKRTRVSTK</sequence>
<organism evidence="13">
    <name type="scientific">Drosophila melanogaster</name>
    <name type="common">Fruit fly</name>
    <dbReference type="NCBI Taxonomy" id="7227"/>
    <lineage>
        <taxon>Eukaryota</taxon>
        <taxon>Metazoa</taxon>
        <taxon>Ecdysozoa</taxon>
        <taxon>Arthropoda</taxon>
        <taxon>Hexapoda</taxon>
        <taxon>Insecta</taxon>
        <taxon>Pterygota</taxon>
        <taxon>Neoptera</taxon>
        <taxon>Endopterygota</taxon>
        <taxon>Diptera</taxon>
        <taxon>Brachycera</taxon>
        <taxon>Muscomorpha</taxon>
        <taxon>Ephydroidea</taxon>
        <taxon>Drosophilidae</taxon>
        <taxon>Drosophila</taxon>
        <taxon>Sophophora</taxon>
    </lineage>
</organism>
<accession>Q9VWI0</accession>
<accession>Q1EC13</accession>
<accession>Q8SZL0</accession>
<gene>
    <name evidence="7 12" type="primary">ND-18</name>
    <name evidence="6" type="synonym">dNDUFS4</name>
    <name evidence="10" type="synonym">NUYM</name>
    <name evidence="12" type="ORF">CG12203</name>
</gene>
<proteinExistence type="evidence at protein level"/>
<protein>
    <recommendedName>
        <fullName evidence="2 6">NADH dehydrogenase [ubiquinone] iron-sulfur protein 4, mitochondrial</fullName>
    </recommendedName>
</protein>
<reference evidence="13" key="1">
    <citation type="journal article" date="2000" name="Science">
        <title>The genome sequence of Drosophila melanogaster.</title>
        <authorList>
            <person name="Adams M.D."/>
            <person name="Celniker S.E."/>
            <person name="Holt R.A."/>
            <person name="Evans C.A."/>
            <person name="Gocayne J.D."/>
            <person name="Amanatides P.G."/>
            <person name="Scherer S.E."/>
            <person name="Li P.W."/>
            <person name="Hoskins R.A."/>
            <person name="Galle R.F."/>
            <person name="George R.A."/>
            <person name="Lewis S.E."/>
            <person name="Richards S."/>
            <person name="Ashburner M."/>
            <person name="Henderson S.N."/>
            <person name="Sutton G.G."/>
            <person name="Wortman J.R."/>
            <person name="Yandell M.D."/>
            <person name="Zhang Q."/>
            <person name="Chen L.X."/>
            <person name="Brandon R.C."/>
            <person name="Rogers Y.-H.C."/>
            <person name="Blazej R.G."/>
            <person name="Champe M."/>
            <person name="Pfeiffer B.D."/>
            <person name="Wan K.H."/>
            <person name="Doyle C."/>
            <person name="Baxter E.G."/>
            <person name="Helt G."/>
            <person name="Nelson C.R."/>
            <person name="Miklos G.L.G."/>
            <person name="Abril J.F."/>
            <person name="Agbayani A."/>
            <person name="An H.-J."/>
            <person name="Andrews-Pfannkoch C."/>
            <person name="Baldwin D."/>
            <person name="Ballew R.M."/>
            <person name="Basu A."/>
            <person name="Baxendale J."/>
            <person name="Bayraktaroglu L."/>
            <person name="Beasley E.M."/>
            <person name="Beeson K.Y."/>
            <person name="Benos P.V."/>
            <person name="Berman B.P."/>
            <person name="Bhandari D."/>
            <person name="Bolshakov S."/>
            <person name="Borkova D."/>
            <person name="Botchan M.R."/>
            <person name="Bouck J."/>
            <person name="Brokstein P."/>
            <person name="Brottier P."/>
            <person name="Burtis K.C."/>
            <person name="Busam D.A."/>
            <person name="Butler H."/>
            <person name="Cadieu E."/>
            <person name="Center A."/>
            <person name="Chandra I."/>
            <person name="Cherry J.M."/>
            <person name="Cawley S."/>
            <person name="Dahlke C."/>
            <person name="Davenport L.B."/>
            <person name="Davies P."/>
            <person name="de Pablos B."/>
            <person name="Delcher A."/>
            <person name="Deng Z."/>
            <person name="Mays A.D."/>
            <person name="Dew I."/>
            <person name="Dietz S.M."/>
            <person name="Dodson K."/>
            <person name="Doup L.E."/>
            <person name="Downes M."/>
            <person name="Dugan-Rocha S."/>
            <person name="Dunkov B.C."/>
            <person name="Dunn P."/>
            <person name="Durbin K.J."/>
            <person name="Evangelista C.C."/>
            <person name="Ferraz C."/>
            <person name="Ferriera S."/>
            <person name="Fleischmann W."/>
            <person name="Fosler C."/>
            <person name="Gabrielian A.E."/>
            <person name="Garg N.S."/>
            <person name="Gelbart W.M."/>
            <person name="Glasser K."/>
            <person name="Glodek A."/>
            <person name="Gong F."/>
            <person name="Gorrell J.H."/>
            <person name="Gu Z."/>
            <person name="Guan P."/>
            <person name="Harris M."/>
            <person name="Harris N.L."/>
            <person name="Harvey D.A."/>
            <person name="Heiman T.J."/>
            <person name="Hernandez J.R."/>
            <person name="Houck J."/>
            <person name="Hostin D."/>
            <person name="Houston K.A."/>
            <person name="Howland T.J."/>
            <person name="Wei M.-H."/>
            <person name="Ibegwam C."/>
            <person name="Jalali M."/>
            <person name="Kalush F."/>
            <person name="Karpen G.H."/>
            <person name="Ke Z."/>
            <person name="Kennison J.A."/>
            <person name="Ketchum K.A."/>
            <person name="Kimmel B.E."/>
            <person name="Kodira C.D."/>
            <person name="Kraft C.L."/>
            <person name="Kravitz S."/>
            <person name="Kulp D."/>
            <person name="Lai Z."/>
            <person name="Lasko P."/>
            <person name="Lei Y."/>
            <person name="Levitsky A.A."/>
            <person name="Li J.H."/>
            <person name="Li Z."/>
            <person name="Liang Y."/>
            <person name="Lin X."/>
            <person name="Liu X."/>
            <person name="Mattei B."/>
            <person name="McIntosh T.C."/>
            <person name="McLeod M.P."/>
            <person name="McPherson D."/>
            <person name="Merkulov G."/>
            <person name="Milshina N.V."/>
            <person name="Mobarry C."/>
            <person name="Morris J."/>
            <person name="Moshrefi A."/>
            <person name="Mount S.M."/>
            <person name="Moy M."/>
            <person name="Murphy B."/>
            <person name="Murphy L."/>
            <person name="Muzny D.M."/>
            <person name="Nelson D.L."/>
            <person name="Nelson D.R."/>
            <person name="Nelson K.A."/>
            <person name="Nixon K."/>
            <person name="Nusskern D.R."/>
            <person name="Pacleb J.M."/>
            <person name="Palazzolo M."/>
            <person name="Pittman G.S."/>
            <person name="Pan S."/>
            <person name="Pollard J."/>
            <person name="Puri V."/>
            <person name="Reese M.G."/>
            <person name="Reinert K."/>
            <person name="Remington K."/>
            <person name="Saunders R.D.C."/>
            <person name="Scheeler F."/>
            <person name="Shen H."/>
            <person name="Shue B.C."/>
            <person name="Siden-Kiamos I."/>
            <person name="Simpson M."/>
            <person name="Skupski M.P."/>
            <person name="Smith T.J."/>
            <person name="Spier E."/>
            <person name="Spradling A.C."/>
            <person name="Stapleton M."/>
            <person name="Strong R."/>
            <person name="Sun E."/>
            <person name="Svirskas R."/>
            <person name="Tector C."/>
            <person name="Turner R."/>
            <person name="Venter E."/>
            <person name="Wang A.H."/>
            <person name="Wang X."/>
            <person name="Wang Z.-Y."/>
            <person name="Wassarman D.A."/>
            <person name="Weinstock G.M."/>
            <person name="Weissenbach J."/>
            <person name="Williams S.M."/>
            <person name="Woodage T."/>
            <person name="Worley K.C."/>
            <person name="Wu D."/>
            <person name="Yang S."/>
            <person name="Yao Q.A."/>
            <person name="Ye J."/>
            <person name="Yeh R.-F."/>
            <person name="Zaveri J.S."/>
            <person name="Zhan M."/>
            <person name="Zhang G."/>
            <person name="Zhao Q."/>
            <person name="Zheng L."/>
            <person name="Zheng X.H."/>
            <person name="Zhong F.N."/>
            <person name="Zhong W."/>
            <person name="Zhou X."/>
            <person name="Zhu S.C."/>
            <person name="Zhu X."/>
            <person name="Smith H.O."/>
            <person name="Gibbs R.A."/>
            <person name="Myers E.W."/>
            <person name="Rubin G.M."/>
            <person name="Venter J.C."/>
        </authorList>
    </citation>
    <scope>NUCLEOTIDE SEQUENCE [LARGE SCALE GENOMIC DNA]</scope>
    <source>
        <strain evidence="13">Berkeley</strain>
    </source>
</reference>
<reference evidence="13" key="2">
    <citation type="journal article" date="2002" name="Genome Biol.">
        <title>Annotation of the Drosophila melanogaster euchromatic genome: a systematic review.</title>
        <authorList>
            <person name="Misra S."/>
            <person name="Crosby M.A."/>
            <person name="Mungall C.J."/>
            <person name="Matthews B.B."/>
            <person name="Campbell K.S."/>
            <person name="Hradecky P."/>
            <person name="Huang Y."/>
            <person name="Kaminker J.S."/>
            <person name="Millburn G.H."/>
            <person name="Prochnik S.E."/>
            <person name="Smith C.D."/>
            <person name="Tupy J.L."/>
            <person name="Whitfield E.J."/>
            <person name="Bayraktaroglu L."/>
            <person name="Berman B.P."/>
            <person name="Bettencourt B.R."/>
            <person name="Celniker S.E."/>
            <person name="de Grey A.D.N.J."/>
            <person name="Drysdale R.A."/>
            <person name="Harris N.L."/>
            <person name="Richter J."/>
            <person name="Russo S."/>
            <person name="Schroeder A.J."/>
            <person name="Shu S.Q."/>
            <person name="Stapleton M."/>
            <person name="Yamada C."/>
            <person name="Ashburner M."/>
            <person name="Gelbart W.M."/>
            <person name="Rubin G.M."/>
            <person name="Lewis S.E."/>
        </authorList>
    </citation>
    <scope>GENOME REANNOTATION</scope>
    <source>
        <strain evidence="13">Berkeley</strain>
    </source>
</reference>
<reference evidence="9" key="3">
    <citation type="journal article" date="2002" name="Genome Biol.">
        <title>A Drosophila full-length cDNA resource.</title>
        <authorList>
            <person name="Stapleton M."/>
            <person name="Carlson J.W."/>
            <person name="Brokstein P."/>
            <person name="Yu C."/>
            <person name="Champe M."/>
            <person name="George R.A."/>
            <person name="Guarin H."/>
            <person name="Kronmiller B."/>
            <person name="Pacleb J.M."/>
            <person name="Park S."/>
            <person name="Wan K.H."/>
            <person name="Rubin G.M."/>
            <person name="Celniker S.E."/>
        </authorList>
    </citation>
    <scope>NUCLEOTIDE SEQUENCE [LARGE SCALE MRNA]</scope>
    <source>
        <strain evidence="9">Berkeley</strain>
        <tissue evidence="9">Head</tissue>
    </source>
</reference>
<reference evidence="11" key="4">
    <citation type="submission" date="2006-06" db="EMBL/GenBank/DDBJ databases">
        <authorList>
            <person name="Stapleton M."/>
            <person name="Carlson J."/>
            <person name="Chavez C."/>
            <person name="Frise E."/>
            <person name="George R."/>
            <person name="Pacleb J."/>
            <person name="Park S."/>
            <person name="Wan K."/>
            <person name="Yu C."/>
            <person name="Celniker S."/>
        </authorList>
    </citation>
    <scope>NUCLEOTIDE SEQUENCE [LARGE SCALE MRNA] OF 26-183</scope>
</reference>
<reference evidence="8" key="5">
    <citation type="journal article" date="2010" name="Mitochondrion">
        <title>Phosphorylation pattern of the NDUFS4 subunit of complex I of the mammalian respiratory chain.</title>
        <authorList>
            <person name="De Rasmo D."/>
            <person name="Palmisano G."/>
            <person name="Scacco S."/>
            <person name="Technikova-Dobrova Z."/>
            <person name="Panelli D."/>
            <person name="Cocco T."/>
            <person name="Sardanelli A.M."/>
            <person name="Gnoni A."/>
            <person name="Micelli L."/>
            <person name="Trani A."/>
            <person name="Di Luccia A."/>
            <person name="Papa S."/>
        </authorList>
    </citation>
    <scope>PHOSPHORYLATION AT SER-181</scope>
</reference>
<reference evidence="8" key="6">
    <citation type="journal article" date="2015" name="Cell">
        <title>Glial lipid droplets and ROS induced by mitochondrial defects promote neurodegeneration.</title>
        <authorList>
            <person name="Liu L."/>
            <person name="Zhang K."/>
            <person name="Sandoval H."/>
            <person name="Yamamoto S."/>
            <person name="Jaiswal M."/>
            <person name="Sanz E."/>
            <person name="Li Z."/>
            <person name="Hui J."/>
            <person name="Graham B.H."/>
            <person name="Quintana A."/>
            <person name="Bellen H.J."/>
        </authorList>
    </citation>
    <scope>DISRUPTION PHENOTYPE</scope>
</reference>
<reference evidence="8" key="7">
    <citation type="journal article" date="2018" name="Dis. Model. Mech.">
        <title>Feeding difficulties, a key feature of the Drosophila NDUFS4 mitochondrial disease model.</title>
        <authorList>
            <person name="Foriel S."/>
            <person name="Beyrath J."/>
            <person name="Eidhof I."/>
            <person name="Rodenburg R.J."/>
            <person name="Schenck A."/>
            <person name="Smeitink J.A.M."/>
        </authorList>
    </citation>
    <scope>DISRUPTION PHENOTYPE</scope>
</reference>
<comment type="function">
    <text evidence="2">Accessory subunit of the mitochondrial membrane respiratory chain NADH dehydrogenase (Complex I), that is believed not to be involved in catalysis. Complex I functions in the transfer of electrons from NADH to the respiratory chain. The immediate electron acceptor for the enzyme is believed to be ubiquinone.</text>
</comment>
<comment type="subcellular location">
    <subcellularLocation>
        <location evidence="2">Mitochondrion inner membrane</location>
        <topology evidence="2">Peripheral membrane protein</topology>
        <orientation evidence="2">Matrix side</orientation>
    </subcellularLocation>
</comment>
<comment type="disruption phenotype">
    <text evidence="4 5">RNAi-mediated knockdown results in mitochondrial membrane respiratory chain NADH dehydrogenase (Complex I) deficiency (PubMed:29590638). Mitochondria in the flight muscle shows a wide range of structural abnormalities including dispersed cristae, onion-like swirling membranes, swollen mitochondria, sparse matrix and irregular cristae densities (PubMed:29590638). Eclosion rate is reduced, locomotion and feeding are severely impaired and lifespan shortened (PubMed:29590638). In the brain, there is a pericerebral fat body deficit (PubMed:29590638). RNAi-mediated knockdown in neurons shortens lifespan and results in mild defects in feeding behavior and geotaxis response (PubMed:29590638). Results in lipid droplet accumulation in the glia (PubMed:25594180). RNAi-mediated knockdown in the glia results in no lipid droplet accumulation (PubMed:25594180). RNAi-mediated knockdown in differentiated muscle impairs feeding and locomotion, and shortens lifespan (PubMed:29590638).</text>
</comment>
<comment type="similarity">
    <text evidence="2">Belongs to the complex I NDUFS4 subunit family.</text>
</comment>
<feature type="transit peptide" description="Mitochondrion" evidence="1">
    <location>
        <begin position="1"/>
        <end position="28"/>
    </location>
</feature>
<feature type="chain" id="PRO_0000451402" description="NADH dehydrogenase [ubiquinone] iron-sulfur protein 4, mitochondrial" evidence="1">
    <location>
        <begin position="29"/>
        <end position="183"/>
    </location>
</feature>
<feature type="modified residue" description="Phosphoserine" evidence="3">
    <location>
        <position position="181"/>
    </location>
</feature>
<feature type="helix" evidence="14">
    <location>
        <begin position="40"/>
        <end position="44"/>
    </location>
</feature>
<feature type="helix" evidence="14">
    <location>
        <begin position="47"/>
        <end position="57"/>
    </location>
</feature>
<feature type="strand" evidence="14">
    <location>
        <begin position="61"/>
        <end position="64"/>
    </location>
</feature>
<feature type="helix" evidence="14">
    <location>
        <begin position="69"/>
        <end position="72"/>
    </location>
</feature>
<feature type="helix" evidence="14">
    <location>
        <begin position="76"/>
        <end position="81"/>
    </location>
</feature>
<feature type="strand" evidence="14">
    <location>
        <begin position="83"/>
        <end position="87"/>
    </location>
</feature>
<feature type="strand" evidence="14">
    <location>
        <begin position="101"/>
        <end position="108"/>
    </location>
</feature>
<feature type="turn" evidence="14">
    <location>
        <begin position="117"/>
        <end position="119"/>
    </location>
</feature>
<feature type="strand" evidence="14">
    <location>
        <begin position="122"/>
        <end position="124"/>
    </location>
</feature>
<feature type="helix" evidence="14">
    <location>
        <begin position="127"/>
        <end position="130"/>
    </location>
</feature>
<feature type="strand" evidence="14">
    <location>
        <begin position="133"/>
        <end position="137"/>
    </location>
</feature>
<feature type="helix" evidence="14">
    <location>
        <begin position="138"/>
        <end position="147"/>
    </location>
</feature>
<feature type="strand" evidence="14">
    <location>
        <begin position="151"/>
        <end position="154"/>
    </location>
</feature>
<feature type="helix" evidence="14">
    <location>
        <begin position="169"/>
        <end position="171"/>
    </location>
</feature>
<feature type="strand" evidence="14">
    <location>
        <begin position="174"/>
        <end position="176"/>
    </location>
</feature>
<dbReference type="EMBL" id="AY070680">
    <property type="protein sequence ID" value="AAL48151.1"/>
    <property type="molecule type" value="mRNA"/>
</dbReference>
<dbReference type="EMBL" id="BT025921">
    <property type="protein sequence ID" value="ABG02165.1"/>
    <property type="molecule type" value="mRNA"/>
</dbReference>
<dbReference type="EMBL" id="AE014298">
    <property type="protein sequence ID" value="AAN09490.1"/>
    <property type="molecule type" value="Genomic_DNA"/>
</dbReference>
<dbReference type="RefSeq" id="NP_573385.1">
    <property type="nucleotide sequence ID" value="NM_133157.4"/>
</dbReference>
<dbReference type="PDB" id="8B9Z">
    <property type="method" value="EM"/>
    <property type="resolution" value="3.28 A"/>
    <property type="chains" value="Q=33-183"/>
</dbReference>
<dbReference type="PDB" id="8BA0">
    <property type="method" value="EM"/>
    <property type="resolution" value="3.68 A"/>
    <property type="chains" value="Q=54-183"/>
</dbReference>
<dbReference type="PDB" id="8ESW">
    <property type="method" value="EM"/>
    <property type="resolution" value="3.30 A"/>
    <property type="chains" value="S4=1-183"/>
</dbReference>
<dbReference type="PDB" id="8ESZ">
    <property type="method" value="EM"/>
    <property type="resolution" value="3.40 A"/>
    <property type="chains" value="S4=1-183"/>
</dbReference>
<dbReference type="PDBsum" id="8B9Z"/>
<dbReference type="PDBsum" id="8BA0"/>
<dbReference type="PDBsum" id="8ESW"/>
<dbReference type="PDBsum" id="8ESZ"/>
<dbReference type="EMDB" id="EMD-15936"/>
<dbReference type="EMDB" id="EMD-15937"/>
<dbReference type="EMDB" id="EMD-28581"/>
<dbReference type="EMDB" id="EMD-28582"/>
<dbReference type="SMR" id="Q9VWI0"/>
<dbReference type="ComplexPortal" id="CPX-8628">
    <property type="entry name" value="Mitochondrial respiratory chain complex I"/>
</dbReference>
<dbReference type="ComplexPortal" id="CPX-8638">
    <property type="entry name" value="Mitochondrial respiratory chain complex I, testis-specific variant"/>
</dbReference>
<dbReference type="FunCoup" id="Q9VWI0">
    <property type="interactions" value="1097"/>
</dbReference>
<dbReference type="IntAct" id="Q9VWI0">
    <property type="interactions" value="2"/>
</dbReference>
<dbReference type="STRING" id="7227.FBpp0074481"/>
<dbReference type="iPTMnet" id="Q9VWI0"/>
<dbReference type="PaxDb" id="7227-FBpp0074481"/>
<dbReference type="DNASU" id="32936"/>
<dbReference type="EnsemblMetazoa" id="FBtr0074712">
    <property type="protein sequence ID" value="FBpp0074481"/>
    <property type="gene ID" value="FBgn0031021"/>
</dbReference>
<dbReference type="GeneID" id="32936"/>
<dbReference type="KEGG" id="dme:Dmel_CG12203"/>
<dbReference type="UCSC" id="CG12203-RA">
    <property type="organism name" value="d. melanogaster"/>
</dbReference>
<dbReference type="AGR" id="FB:FBgn0031021"/>
<dbReference type="CTD" id="32936"/>
<dbReference type="FlyBase" id="FBgn0031021">
    <property type="gene designation" value="ND-18"/>
</dbReference>
<dbReference type="VEuPathDB" id="VectorBase:FBgn0031021"/>
<dbReference type="eggNOG" id="KOG3389">
    <property type="taxonomic scope" value="Eukaryota"/>
</dbReference>
<dbReference type="GeneTree" id="ENSGT00390000013835"/>
<dbReference type="HOGENOM" id="CLU_077196_3_1_1"/>
<dbReference type="InParanoid" id="Q9VWI0"/>
<dbReference type="OMA" id="WRWYVDG"/>
<dbReference type="OrthoDB" id="3089at2759"/>
<dbReference type="PhylomeDB" id="Q9VWI0"/>
<dbReference type="Reactome" id="R-DME-611105">
    <property type="pathway name" value="Respiratory electron transport"/>
</dbReference>
<dbReference type="Reactome" id="R-DME-6799198">
    <property type="pathway name" value="Complex I biogenesis"/>
</dbReference>
<dbReference type="BioGRID-ORCS" id="32936">
    <property type="hits" value="0 hits in 1 CRISPR screen"/>
</dbReference>
<dbReference type="ChiTaRS" id="ND-18">
    <property type="organism name" value="fly"/>
</dbReference>
<dbReference type="GenomeRNAi" id="32936"/>
<dbReference type="PRO" id="PR:Q9VWI0"/>
<dbReference type="Proteomes" id="UP000000803">
    <property type="component" value="Chromosome X"/>
</dbReference>
<dbReference type="Bgee" id="FBgn0031021">
    <property type="expression patterns" value="Expressed in dorsal cluster neuron (Drosophila) in brain and 220 other cell types or tissues"/>
</dbReference>
<dbReference type="ExpressionAtlas" id="Q9VWI0">
    <property type="expression patterns" value="baseline and differential"/>
</dbReference>
<dbReference type="GO" id="GO:0005743">
    <property type="term" value="C:mitochondrial inner membrane"/>
    <property type="evidence" value="ECO:0000305"/>
    <property type="project" value="FlyBase"/>
</dbReference>
<dbReference type="GO" id="GO:0045271">
    <property type="term" value="C:respiratory chain complex I"/>
    <property type="evidence" value="ECO:0000314"/>
    <property type="project" value="FlyBase"/>
</dbReference>
<dbReference type="GO" id="GO:0006120">
    <property type="term" value="P:mitochondrial electron transport, NADH to ubiquinone"/>
    <property type="evidence" value="ECO:0000305"/>
    <property type="project" value="FlyBase"/>
</dbReference>
<dbReference type="FunFam" id="3.30.160.190:FF:000001">
    <property type="entry name" value="NADH-ubiquinone oxidoreductase 21 kDa subunit mitochondrial"/>
    <property type="match status" value="1"/>
</dbReference>
<dbReference type="Gene3D" id="3.30.160.190">
    <property type="entry name" value="atu1810 like domain"/>
    <property type="match status" value="1"/>
</dbReference>
<dbReference type="InterPro" id="IPR006885">
    <property type="entry name" value="NADH_UbQ_FeS_4_mit-like"/>
</dbReference>
<dbReference type="InterPro" id="IPR038532">
    <property type="entry name" value="NDUFS4-like_sf"/>
</dbReference>
<dbReference type="PANTHER" id="PTHR12219:SF8">
    <property type="entry name" value="NADH DEHYDROGENASE [UBIQUINONE] IRON-SULFUR PROTEIN 4, MITOCHONDRIAL"/>
    <property type="match status" value="1"/>
</dbReference>
<dbReference type="PANTHER" id="PTHR12219">
    <property type="entry name" value="NADH-UBIQUINONE OXIDOREDUCTASE"/>
    <property type="match status" value="1"/>
</dbReference>
<dbReference type="Pfam" id="PF04800">
    <property type="entry name" value="NDUS4"/>
    <property type="match status" value="1"/>
</dbReference>